<protein>
    <recommendedName>
        <fullName evidence="2">ATP synthase subunit b</fullName>
    </recommendedName>
    <alternativeName>
        <fullName evidence="2">ATP synthase F(0) sector subunit b</fullName>
    </alternativeName>
    <alternativeName>
        <fullName evidence="2">ATPase subunit I</fullName>
    </alternativeName>
    <alternativeName>
        <fullName evidence="2">F-type ATPase subunit b</fullName>
        <shortName evidence="2">F-ATPase subunit b</shortName>
    </alternativeName>
</protein>
<proteinExistence type="inferred from homology"/>
<dbReference type="EMBL" id="CP001099">
    <property type="protein sequence ID" value="ACF12437.1"/>
    <property type="molecule type" value="Genomic_DNA"/>
</dbReference>
<dbReference type="RefSeq" id="WP_012503270.1">
    <property type="nucleotide sequence ID" value="NC_011027.1"/>
</dbReference>
<dbReference type="SMR" id="B3QLV1"/>
<dbReference type="STRING" id="517417.Cpar_2050"/>
<dbReference type="KEGG" id="cpc:Cpar_2050"/>
<dbReference type="eggNOG" id="COG0711">
    <property type="taxonomic scope" value="Bacteria"/>
</dbReference>
<dbReference type="HOGENOM" id="CLU_079215_4_1_10"/>
<dbReference type="OrthoDB" id="9795289at2"/>
<dbReference type="Proteomes" id="UP000008811">
    <property type="component" value="Chromosome"/>
</dbReference>
<dbReference type="GO" id="GO:0005886">
    <property type="term" value="C:plasma membrane"/>
    <property type="evidence" value="ECO:0007669"/>
    <property type="project" value="UniProtKB-SubCell"/>
</dbReference>
<dbReference type="GO" id="GO:0045259">
    <property type="term" value="C:proton-transporting ATP synthase complex"/>
    <property type="evidence" value="ECO:0007669"/>
    <property type="project" value="UniProtKB-KW"/>
</dbReference>
<dbReference type="GO" id="GO:0046933">
    <property type="term" value="F:proton-transporting ATP synthase activity, rotational mechanism"/>
    <property type="evidence" value="ECO:0007669"/>
    <property type="project" value="UniProtKB-UniRule"/>
</dbReference>
<dbReference type="GO" id="GO:0046961">
    <property type="term" value="F:proton-transporting ATPase activity, rotational mechanism"/>
    <property type="evidence" value="ECO:0007669"/>
    <property type="project" value="TreeGrafter"/>
</dbReference>
<dbReference type="CDD" id="cd06503">
    <property type="entry name" value="ATP-synt_Fo_b"/>
    <property type="match status" value="1"/>
</dbReference>
<dbReference type="Gene3D" id="1.20.5.620">
    <property type="entry name" value="F1F0 ATP synthase subunit B, membrane domain"/>
    <property type="match status" value="1"/>
</dbReference>
<dbReference type="HAMAP" id="MF_01398">
    <property type="entry name" value="ATP_synth_b_bprime"/>
    <property type="match status" value="1"/>
</dbReference>
<dbReference type="InterPro" id="IPR028987">
    <property type="entry name" value="ATP_synth_B-like_membr_sf"/>
</dbReference>
<dbReference type="InterPro" id="IPR002146">
    <property type="entry name" value="ATP_synth_b/b'su_bac/chlpt"/>
</dbReference>
<dbReference type="InterPro" id="IPR005864">
    <property type="entry name" value="ATP_synth_F0_bsu_bac"/>
</dbReference>
<dbReference type="InterPro" id="IPR050059">
    <property type="entry name" value="ATP_synthase_B_chain"/>
</dbReference>
<dbReference type="NCBIfam" id="TIGR01144">
    <property type="entry name" value="ATP_synt_b"/>
    <property type="match status" value="1"/>
</dbReference>
<dbReference type="NCBIfam" id="NF011042">
    <property type="entry name" value="PRK14472.1"/>
    <property type="match status" value="1"/>
</dbReference>
<dbReference type="PANTHER" id="PTHR33445:SF1">
    <property type="entry name" value="ATP SYNTHASE SUBUNIT B"/>
    <property type="match status" value="1"/>
</dbReference>
<dbReference type="PANTHER" id="PTHR33445">
    <property type="entry name" value="ATP SYNTHASE SUBUNIT B', CHLOROPLASTIC"/>
    <property type="match status" value="1"/>
</dbReference>
<dbReference type="Pfam" id="PF00430">
    <property type="entry name" value="ATP-synt_B"/>
    <property type="match status" value="1"/>
</dbReference>
<dbReference type="SUPFAM" id="SSF81573">
    <property type="entry name" value="F1F0 ATP synthase subunit B, membrane domain"/>
    <property type="match status" value="1"/>
</dbReference>
<organism>
    <name type="scientific">Chlorobaculum parvum (strain DSM 263 / NCIMB 8327)</name>
    <name type="common">Chlorobium vibrioforme subsp. thiosulfatophilum</name>
    <dbReference type="NCBI Taxonomy" id="517417"/>
    <lineage>
        <taxon>Bacteria</taxon>
        <taxon>Pseudomonadati</taxon>
        <taxon>Chlorobiota</taxon>
        <taxon>Chlorobiia</taxon>
        <taxon>Chlorobiales</taxon>
        <taxon>Chlorobiaceae</taxon>
        <taxon>Chlorobaculum</taxon>
    </lineage>
</organism>
<sequence>MLTSGIILLSGGLLSPNPGLIFWTAVTFVIVLVILKKIAWGPIVSMLEEREKGIQSAIDRAHTAKEEAESILKKNKEMLAKADAEADKIIREGKEYADKVRSELTEKAQVESQKMIAAAKEEIEQEKRRALDVLRNEVADMAVKGAEKIIRTTLDADKQKAVVNDMINEMAAKRN</sequence>
<keyword id="KW-0066">ATP synthesis</keyword>
<keyword id="KW-0997">Cell inner membrane</keyword>
<keyword id="KW-1003">Cell membrane</keyword>
<keyword id="KW-0138">CF(0)</keyword>
<keyword id="KW-0375">Hydrogen ion transport</keyword>
<keyword id="KW-0406">Ion transport</keyword>
<keyword id="KW-0472">Membrane</keyword>
<keyword id="KW-0812">Transmembrane</keyword>
<keyword id="KW-1133">Transmembrane helix</keyword>
<keyword id="KW-0813">Transport</keyword>
<accession>B3QLV1</accession>
<evidence type="ECO:0000250" key="1"/>
<evidence type="ECO:0000255" key="2">
    <source>
        <dbReference type="HAMAP-Rule" id="MF_01398"/>
    </source>
</evidence>
<gene>
    <name evidence="2" type="primary">atpF</name>
    <name type="ordered locus">Cpar_2050</name>
</gene>
<reference key="1">
    <citation type="submission" date="2008-06" db="EMBL/GenBank/DDBJ databases">
        <title>Complete sequence of Chlorobaculum parvum NCIB 8327.</title>
        <authorList>
            <consortium name="US DOE Joint Genome Institute"/>
            <person name="Lucas S."/>
            <person name="Copeland A."/>
            <person name="Lapidus A."/>
            <person name="Glavina del Rio T."/>
            <person name="Dalin E."/>
            <person name="Tice H."/>
            <person name="Bruce D."/>
            <person name="Goodwin L."/>
            <person name="Pitluck S."/>
            <person name="Schmutz J."/>
            <person name="Larimer F."/>
            <person name="Land M."/>
            <person name="Hauser L."/>
            <person name="Kyrpides N."/>
            <person name="Mikhailova N."/>
            <person name="Zhao F."/>
            <person name="Li T."/>
            <person name="Liu Z."/>
            <person name="Overmann J."/>
            <person name="Bryant D.A."/>
            <person name="Richardson P."/>
        </authorList>
    </citation>
    <scope>NUCLEOTIDE SEQUENCE [LARGE SCALE GENOMIC DNA]</scope>
    <source>
        <strain>DSM 263 / NCIMB 8327</strain>
    </source>
</reference>
<comment type="function">
    <text evidence="2">F(1)F(0) ATP synthase produces ATP from ADP in the presence of a proton or sodium gradient. F-type ATPases consist of two structural domains, F(1) containing the extramembraneous catalytic core and F(0) containing the membrane proton channel, linked together by a central stalk and a peripheral stalk. During catalysis, ATP synthesis in the catalytic domain of F(1) is coupled via a rotary mechanism of the central stalk subunits to proton translocation.</text>
</comment>
<comment type="function">
    <text evidence="2">Component of the F(0) channel, it forms part of the peripheral stalk, linking F(1) to F(0).</text>
</comment>
<comment type="subunit">
    <text evidence="1">F-type ATPases have 2 components, F(1) - the catalytic core - and F(0) - the membrane proton channel. F(1) has five subunits: alpha(3), beta(3), gamma(1), delta(1), epsilon(1). F(0) has four main subunits: a(1), b(2) and c(10-14). The alpha and beta chains form an alternating ring which encloses part of the gamma chain. F(1) is attached to F(0) by a central stalk formed by the gamma and epsilon chains, while a peripheral stalk is formed by the delta and b chains (By similarity).</text>
</comment>
<comment type="subcellular location">
    <subcellularLocation>
        <location evidence="2">Cell inner membrane</location>
        <topology evidence="2">Single-pass membrane protein</topology>
    </subcellularLocation>
</comment>
<comment type="similarity">
    <text evidence="2">Belongs to the ATPase B chain family.</text>
</comment>
<feature type="chain" id="PRO_0000368407" description="ATP synthase subunit b">
    <location>
        <begin position="1"/>
        <end position="175"/>
    </location>
</feature>
<feature type="transmembrane region" description="Helical" evidence="2">
    <location>
        <begin position="20"/>
        <end position="40"/>
    </location>
</feature>
<name>ATPF_CHLP8</name>